<feature type="chain" id="PRO_1000006420" description="Glycine--tRNA ligase beta subunit">
    <location>
        <begin position="1"/>
        <end position="693"/>
    </location>
</feature>
<sequence>MAKEFLIELGTEELPPTQLRTLAEAFAANFEAELKGAELAHEGVKWFAAPRRLALKVAALADSQSDKVVEKRGPAVSAAFDAEGNPTKAAQGWARGCGITVDQAERMVTDKGEWLLFKQEVKGQPTSQIVVELAAKALANLPIAKPMRWGNKTTQFIRPVKTLTMLMGSDLIEGEILGVASDRTIRGHRFMGEQEFTIDSAEQYPAILEERGKVMADYEARKAIILADAQKAAAAVGGIADLEDDLVEEVTSLVEWPVVLTAKFEEEFLKVPSEALVYTMKGDQKYFPVYSHENGDENKKLLPNFIFVSNIESKEPRYVIEGNEKVVRPRLADAEFFFNTDRKRPLIDRLPELEQAIFQKQLGTIKDKTDRITELAGYIAEQIGADVEKSKRAGLLAKCDLMTSMVFEFTDTQGVMGMHYARHDGEAEEVAVALNEQYMPRFAGDELPSNGVSTAVAMADKLDTIVGIFGIGQAPKGSDPFALRRASLGVLRIIVEYGYNLDLVDLVAKAKSLFGDRLTNDNVEQDVIEFMLGRFRAWYQDEGFSVDIIQAVLARRPTKPADFDQRVKAVSHFRELEAAESLAAANKRVGNILAKFDGELAADIDLALLQEDAEKALAESVEVMTEALEPAFATGNYQEALSKLADLREPVDAFFDNVMVMADDEALKKNRLTLLNNLRNLFLQIADISLLQK</sequence>
<accession>A7N1D8</accession>
<organism>
    <name type="scientific">Vibrio campbellii (strain ATCC BAA-1116)</name>
    <dbReference type="NCBI Taxonomy" id="2902295"/>
    <lineage>
        <taxon>Bacteria</taxon>
        <taxon>Pseudomonadati</taxon>
        <taxon>Pseudomonadota</taxon>
        <taxon>Gammaproteobacteria</taxon>
        <taxon>Vibrionales</taxon>
        <taxon>Vibrionaceae</taxon>
        <taxon>Vibrio</taxon>
    </lineage>
</organism>
<evidence type="ECO:0000255" key="1">
    <source>
        <dbReference type="HAMAP-Rule" id="MF_00255"/>
    </source>
</evidence>
<protein>
    <recommendedName>
        <fullName evidence="1">Glycine--tRNA ligase beta subunit</fullName>
        <ecNumber evidence="1">6.1.1.14</ecNumber>
    </recommendedName>
    <alternativeName>
        <fullName evidence="1">Glycyl-tRNA synthetase beta subunit</fullName>
        <shortName evidence="1">GlyRS</shortName>
    </alternativeName>
</protein>
<dbReference type="EC" id="6.1.1.14" evidence="1"/>
<dbReference type="EMBL" id="CP000789">
    <property type="protein sequence ID" value="ABU69464.1"/>
    <property type="molecule type" value="Genomic_DNA"/>
</dbReference>
<dbReference type="RefSeq" id="WP_012126670.1">
    <property type="nucleotide sequence ID" value="NC_009783.1"/>
</dbReference>
<dbReference type="SMR" id="A7N1D8"/>
<dbReference type="KEGG" id="vha:VIBHAR_00449"/>
<dbReference type="PATRIC" id="fig|338187.25.peg.2141"/>
<dbReference type="Proteomes" id="UP000008152">
    <property type="component" value="Chromosome I"/>
</dbReference>
<dbReference type="GO" id="GO:0005829">
    <property type="term" value="C:cytosol"/>
    <property type="evidence" value="ECO:0007669"/>
    <property type="project" value="TreeGrafter"/>
</dbReference>
<dbReference type="GO" id="GO:0004814">
    <property type="term" value="F:arginine-tRNA ligase activity"/>
    <property type="evidence" value="ECO:0007669"/>
    <property type="project" value="InterPro"/>
</dbReference>
<dbReference type="GO" id="GO:0005524">
    <property type="term" value="F:ATP binding"/>
    <property type="evidence" value="ECO:0007669"/>
    <property type="project" value="UniProtKB-UniRule"/>
</dbReference>
<dbReference type="GO" id="GO:0004820">
    <property type="term" value="F:glycine-tRNA ligase activity"/>
    <property type="evidence" value="ECO:0007669"/>
    <property type="project" value="UniProtKB-UniRule"/>
</dbReference>
<dbReference type="GO" id="GO:0006420">
    <property type="term" value="P:arginyl-tRNA aminoacylation"/>
    <property type="evidence" value="ECO:0007669"/>
    <property type="project" value="InterPro"/>
</dbReference>
<dbReference type="GO" id="GO:0006426">
    <property type="term" value="P:glycyl-tRNA aminoacylation"/>
    <property type="evidence" value="ECO:0007669"/>
    <property type="project" value="UniProtKB-UniRule"/>
</dbReference>
<dbReference type="Gene3D" id="1.10.730.10">
    <property type="entry name" value="Isoleucyl-tRNA Synthetase, Domain 1"/>
    <property type="match status" value="1"/>
</dbReference>
<dbReference type="HAMAP" id="MF_00255">
    <property type="entry name" value="Gly_tRNA_synth_beta"/>
    <property type="match status" value="1"/>
</dbReference>
<dbReference type="InterPro" id="IPR008909">
    <property type="entry name" value="DALR_anticod-bd"/>
</dbReference>
<dbReference type="InterPro" id="IPR015944">
    <property type="entry name" value="Gly-tRNA-synth_bsu"/>
</dbReference>
<dbReference type="InterPro" id="IPR006194">
    <property type="entry name" value="Gly-tRNA-synth_heterodimer"/>
</dbReference>
<dbReference type="NCBIfam" id="TIGR00211">
    <property type="entry name" value="glyS"/>
    <property type="match status" value="1"/>
</dbReference>
<dbReference type="PANTHER" id="PTHR30075:SF2">
    <property type="entry name" value="GLYCINE--TRNA LIGASE, CHLOROPLASTIC_MITOCHONDRIAL 2"/>
    <property type="match status" value="1"/>
</dbReference>
<dbReference type="PANTHER" id="PTHR30075">
    <property type="entry name" value="GLYCYL-TRNA SYNTHETASE"/>
    <property type="match status" value="1"/>
</dbReference>
<dbReference type="Pfam" id="PF05746">
    <property type="entry name" value="DALR_1"/>
    <property type="match status" value="1"/>
</dbReference>
<dbReference type="Pfam" id="PF02092">
    <property type="entry name" value="tRNA_synt_2f"/>
    <property type="match status" value="1"/>
</dbReference>
<dbReference type="PRINTS" id="PR01045">
    <property type="entry name" value="TRNASYNTHGB"/>
</dbReference>
<dbReference type="SUPFAM" id="SSF109604">
    <property type="entry name" value="HD-domain/PDEase-like"/>
    <property type="match status" value="1"/>
</dbReference>
<dbReference type="PROSITE" id="PS50861">
    <property type="entry name" value="AA_TRNA_LIGASE_II_GLYAB"/>
    <property type="match status" value="1"/>
</dbReference>
<keyword id="KW-0030">Aminoacyl-tRNA synthetase</keyword>
<keyword id="KW-0067">ATP-binding</keyword>
<keyword id="KW-0963">Cytoplasm</keyword>
<keyword id="KW-0436">Ligase</keyword>
<keyword id="KW-0547">Nucleotide-binding</keyword>
<keyword id="KW-0648">Protein biosynthesis</keyword>
<comment type="catalytic activity">
    <reaction evidence="1">
        <text>tRNA(Gly) + glycine + ATP = glycyl-tRNA(Gly) + AMP + diphosphate</text>
        <dbReference type="Rhea" id="RHEA:16013"/>
        <dbReference type="Rhea" id="RHEA-COMP:9664"/>
        <dbReference type="Rhea" id="RHEA-COMP:9683"/>
        <dbReference type="ChEBI" id="CHEBI:30616"/>
        <dbReference type="ChEBI" id="CHEBI:33019"/>
        <dbReference type="ChEBI" id="CHEBI:57305"/>
        <dbReference type="ChEBI" id="CHEBI:78442"/>
        <dbReference type="ChEBI" id="CHEBI:78522"/>
        <dbReference type="ChEBI" id="CHEBI:456215"/>
        <dbReference type="EC" id="6.1.1.14"/>
    </reaction>
</comment>
<comment type="subunit">
    <text evidence="1">Tetramer of two alpha and two beta subunits.</text>
</comment>
<comment type="subcellular location">
    <subcellularLocation>
        <location evidence="1">Cytoplasm</location>
    </subcellularLocation>
</comment>
<comment type="similarity">
    <text evidence="1">Belongs to the class-II aminoacyl-tRNA synthetase family.</text>
</comment>
<gene>
    <name evidence="1" type="primary">glyS</name>
    <name type="ordered locus">VIBHAR_00449</name>
</gene>
<proteinExistence type="inferred from homology"/>
<name>SYGB_VIBC1</name>
<reference key="1">
    <citation type="submission" date="2007-08" db="EMBL/GenBank/DDBJ databases">
        <authorList>
            <consortium name="The Vibrio harveyi Genome Sequencing Project"/>
            <person name="Bassler B."/>
            <person name="Clifton S.W."/>
            <person name="Fulton L."/>
            <person name="Delehaunty K."/>
            <person name="Fronick C."/>
            <person name="Harrison M."/>
            <person name="Markivic C."/>
            <person name="Fulton R."/>
            <person name="Tin-Wollam A.-M."/>
            <person name="Shah N."/>
            <person name="Pepin K."/>
            <person name="Nash W."/>
            <person name="Thiruvilangam P."/>
            <person name="Bhonagiri V."/>
            <person name="Waters C."/>
            <person name="Tu K.C."/>
            <person name="Irgon J."/>
            <person name="Wilson R.K."/>
        </authorList>
    </citation>
    <scope>NUCLEOTIDE SEQUENCE [LARGE SCALE GENOMIC DNA]</scope>
    <source>
        <strain>ATCC BAA-1116 / BB120</strain>
    </source>
</reference>